<reference key="1">
    <citation type="journal article" date="2003" name="Appl. Microbiol. Biotechnol.">
        <title>The Corynebacterium glutamicum genome: features and impacts on biotechnological processes.</title>
        <authorList>
            <person name="Ikeda M."/>
            <person name="Nakagawa S."/>
        </authorList>
    </citation>
    <scope>NUCLEOTIDE SEQUENCE [LARGE SCALE GENOMIC DNA]</scope>
    <source>
        <strain>ATCC 13032 / DSM 20300 / JCM 1318 / BCRC 11384 / CCUG 27702 / LMG 3730 / NBRC 12168 / NCIMB 10025 / NRRL B-2784 / 534</strain>
    </source>
</reference>
<reference key="2">
    <citation type="journal article" date="2003" name="J. Biotechnol.">
        <title>The complete Corynebacterium glutamicum ATCC 13032 genome sequence and its impact on the production of L-aspartate-derived amino acids and vitamins.</title>
        <authorList>
            <person name="Kalinowski J."/>
            <person name="Bathe B."/>
            <person name="Bartels D."/>
            <person name="Bischoff N."/>
            <person name="Bott M."/>
            <person name="Burkovski A."/>
            <person name="Dusch N."/>
            <person name="Eggeling L."/>
            <person name="Eikmanns B.J."/>
            <person name="Gaigalat L."/>
            <person name="Goesmann A."/>
            <person name="Hartmann M."/>
            <person name="Huthmacher K."/>
            <person name="Kraemer R."/>
            <person name="Linke B."/>
            <person name="McHardy A.C."/>
            <person name="Meyer F."/>
            <person name="Moeckel B."/>
            <person name="Pfefferle W."/>
            <person name="Puehler A."/>
            <person name="Rey D.A."/>
            <person name="Rueckert C."/>
            <person name="Rupp O."/>
            <person name="Sahm H."/>
            <person name="Wendisch V.F."/>
            <person name="Wiegraebe I."/>
            <person name="Tauch A."/>
        </authorList>
    </citation>
    <scope>NUCLEOTIDE SEQUENCE [LARGE SCALE GENOMIC DNA]</scope>
    <source>
        <strain>ATCC 13032 / DSM 20300 / JCM 1318 / BCRC 11384 / CCUG 27702 / LMG 3730 / NBRC 12168 / NCIMB 10025 / NRRL B-2784 / 534</strain>
    </source>
</reference>
<proteinExistence type="inferred from homology"/>
<dbReference type="EMBL" id="BA000036">
    <property type="protein sequence ID" value="BAB97911.1"/>
    <property type="molecule type" value="Genomic_DNA"/>
</dbReference>
<dbReference type="EMBL" id="BX927149">
    <property type="protein sequence ID" value="CAF19226.1"/>
    <property type="molecule type" value="Genomic_DNA"/>
</dbReference>
<dbReference type="RefSeq" id="NP_599757.1">
    <property type="nucleotide sequence ID" value="NC_003450.3"/>
</dbReference>
<dbReference type="RefSeq" id="WP_003854306.1">
    <property type="nucleotide sequence ID" value="NC_006958.1"/>
</dbReference>
<dbReference type="SMR" id="Q8NSZ7"/>
<dbReference type="STRING" id="196627.cg0604"/>
<dbReference type="GeneID" id="1021513"/>
<dbReference type="KEGG" id="cgb:cg0604"/>
<dbReference type="KEGG" id="cgl:Cgl0517"/>
<dbReference type="PATRIC" id="fig|196627.13.peg.512"/>
<dbReference type="eggNOG" id="COG0186">
    <property type="taxonomic scope" value="Bacteria"/>
</dbReference>
<dbReference type="HOGENOM" id="CLU_073626_1_0_11"/>
<dbReference type="OrthoDB" id="9811714at2"/>
<dbReference type="BioCyc" id="CORYNE:G18NG-10080-MONOMER"/>
<dbReference type="Proteomes" id="UP000000582">
    <property type="component" value="Chromosome"/>
</dbReference>
<dbReference type="Proteomes" id="UP000001009">
    <property type="component" value="Chromosome"/>
</dbReference>
<dbReference type="GO" id="GO:0022627">
    <property type="term" value="C:cytosolic small ribosomal subunit"/>
    <property type="evidence" value="ECO:0007669"/>
    <property type="project" value="TreeGrafter"/>
</dbReference>
<dbReference type="GO" id="GO:0019843">
    <property type="term" value="F:rRNA binding"/>
    <property type="evidence" value="ECO:0007669"/>
    <property type="project" value="UniProtKB-UniRule"/>
</dbReference>
<dbReference type="GO" id="GO:0003735">
    <property type="term" value="F:structural constituent of ribosome"/>
    <property type="evidence" value="ECO:0007669"/>
    <property type="project" value="InterPro"/>
</dbReference>
<dbReference type="GO" id="GO:0006412">
    <property type="term" value="P:translation"/>
    <property type="evidence" value="ECO:0007669"/>
    <property type="project" value="UniProtKB-UniRule"/>
</dbReference>
<dbReference type="CDD" id="cd00364">
    <property type="entry name" value="Ribosomal_uS17"/>
    <property type="match status" value="1"/>
</dbReference>
<dbReference type="Gene3D" id="2.40.50.140">
    <property type="entry name" value="Nucleic acid-binding proteins"/>
    <property type="match status" value="1"/>
</dbReference>
<dbReference type="HAMAP" id="MF_01345_B">
    <property type="entry name" value="Ribosomal_uS17_B"/>
    <property type="match status" value="1"/>
</dbReference>
<dbReference type="InterPro" id="IPR012340">
    <property type="entry name" value="NA-bd_OB-fold"/>
</dbReference>
<dbReference type="InterPro" id="IPR000266">
    <property type="entry name" value="Ribosomal_uS17"/>
</dbReference>
<dbReference type="InterPro" id="IPR019984">
    <property type="entry name" value="Ribosomal_uS17_bact/chlr"/>
</dbReference>
<dbReference type="InterPro" id="IPR019979">
    <property type="entry name" value="Ribosomal_uS17_CS"/>
</dbReference>
<dbReference type="NCBIfam" id="NF004123">
    <property type="entry name" value="PRK05610.1"/>
    <property type="match status" value="1"/>
</dbReference>
<dbReference type="NCBIfam" id="TIGR03635">
    <property type="entry name" value="uS17_bact"/>
    <property type="match status" value="1"/>
</dbReference>
<dbReference type="PANTHER" id="PTHR10744">
    <property type="entry name" value="40S RIBOSOMAL PROTEIN S11 FAMILY MEMBER"/>
    <property type="match status" value="1"/>
</dbReference>
<dbReference type="PANTHER" id="PTHR10744:SF1">
    <property type="entry name" value="SMALL RIBOSOMAL SUBUNIT PROTEIN US17M"/>
    <property type="match status" value="1"/>
</dbReference>
<dbReference type="Pfam" id="PF00366">
    <property type="entry name" value="Ribosomal_S17"/>
    <property type="match status" value="1"/>
</dbReference>
<dbReference type="PRINTS" id="PR00973">
    <property type="entry name" value="RIBOSOMALS17"/>
</dbReference>
<dbReference type="SUPFAM" id="SSF50249">
    <property type="entry name" value="Nucleic acid-binding proteins"/>
    <property type="match status" value="1"/>
</dbReference>
<dbReference type="PROSITE" id="PS00056">
    <property type="entry name" value="RIBOSOMAL_S17"/>
    <property type="match status" value="1"/>
</dbReference>
<accession>Q8NSZ7</accession>
<accession>Q6M7M9</accession>
<protein>
    <recommendedName>
        <fullName evidence="1">Small ribosomal subunit protein uS17</fullName>
    </recommendedName>
    <alternativeName>
        <fullName evidence="2">30S ribosomal protein S17</fullName>
    </alternativeName>
</protein>
<evidence type="ECO:0000255" key="1">
    <source>
        <dbReference type="HAMAP-Rule" id="MF_01345"/>
    </source>
</evidence>
<evidence type="ECO:0000305" key="2"/>
<keyword id="KW-1185">Reference proteome</keyword>
<keyword id="KW-0687">Ribonucleoprotein</keyword>
<keyword id="KW-0689">Ribosomal protein</keyword>
<keyword id="KW-0694">RNA-binding</keyword>
<keyword id="KW-0699">rRNA-binding</keyword>
<gene>
    <name evidence="1" type="primary">rpsQ</name>
    <name type="ordered locus">Cgl0517</name>
    <name type="ordered locus">cg0604</name>
</gene>
<sequence>MSEANVNNQEKSTRKVRTGYVVSDKMQKTIVVEVEDRKQHALYGKILRSAKKVKAHDEEQIAGIGDLVRIEETRPLSKDKNYRLIEIVEKAK</sequence>
<name>RS17_CORGL</name>
<organism>
    <name type="scientific">Corynebacterium glutamicum (strain ATCC 13032 / DSM 20300 / JCM 1318 / BCRC 11384 / CCUG 27702 / LMG 3730 / NBRC 12168 / NCIMB 10025 / NRRL B-2784 / 534)</name>
    <dbReference type="NCBI Taxonomy" id="196627"/>
    <lineage>
        <taxon>Bacteria</taxon>
        <taxon>Bacillati</taxon>
        <taxon>Actinomycetota</taxon>
        <taxon>Actinomycetes</taxon>
        <taxon>Mycobacteriales</taxon>
        <taxon>Corynebacteriaceae</taxon>
        <taxon>Corynebacterium</taxon>
    </lineage>
</organism>
<comment type="function">
    <text evidence="1">One of the primary rRNA binding proteins, it binds specifically to the 5'-end of 16S ribosomal RNA.</text>
</comment>
<comment type="subunit">
    <text evidence="1">Part of the 30S ribosomal subunit.</text>
</comment>
<comment type="similarity">
    <text evidence="1">Belongs to the universal ribosomal protein uS17 family.</text>
</comment>
<feature type="chain" id="PRO_0000233465" description="Small ribosomal subunit protein uS17">
    <location>
        <begin position="1"/>
        <end position="92"/>
    </location>
</feature>